<keyword id="KW-0028">Amino-acid biosynthesis</keyword>
<keyword id="KW-0057">Aromatic amino acid biosynthesis</keyword>
<keyword id="KW-0456">Lyase</keyword>
<keyword id="KW-1185">Reference proteome</keyword>
<keyword id="KW-0822">Tryptophan biosynthesis</keyword>
<gene>
    <name evidence="1" type="primary">trpA</name>
    <name type="ordered locus">Pden_0333</name>
</gene>
<name>TRPA_PARDP</name>
<protein>
    <recommendedName>
        <fullName evidence="1">Tryptophan synthase alpha chain</fullName>
        <ecNumber evidence="1">4.2.1.20</ecNumber>
    </recommendedName>
</protein>
<dbReference type="EC" id="4.2.1.20" evidence="1"/>
<dbReference type="EMBL" id="CP000489">
    <property type="protein sequence ID" value="ABL68447.1"/>
    <property type="molecule type" value="Genomic_DNA"/>
</dbReference>
<dbReference type="RefSeq" id="WP_011746680.1">
    <property type="nucleotide sequence ID" value="NC_008686.1"/>
</dbReference>
<dbReference type="SMR" id="A1AYV3"/>
<dbReference type="STRING" id="318586.Pden_0333"/>
<dbReference type="EnsemblBacteria" id="ABL68447">
    <property type="protein sequence ID" value="ABL68447"/>
    <property type="gene ID" value="Pden_0333"/>
</dbReference>
<dbReference type="GeneID" id="93451553"/>
<dbReference type="KEGG" id="pde:Pden_0333"/>
<dbReference type="eggNOG" id="COG0159">
    <property type="taxonomic scope" value="Bacteria"/>
</dbReference>
<dbReference type="HOGENOM" id="CLU_016734_0_0_5"/>
<dbReference type="OrthoDB" id="9804578at2"/>
<dbReference type="UniPathway" id="UPA00035">
    <property type="reaction ID" value="UER00044"/>
</dbReference>
<dbReference type="Proteomes" id="UP000000361">
    <property type="component" value="Chromosome 1"/>
</dbReference>
<dbReference type="GO" id="GO:0005829">
    <property type="term" value="C:cytosol"/>
    <property type="evidence" value="ECO:0007669"/>
    <property type="project" value="TreeGrafter"/>
</dbReference>
<dbReference type="GO" id="GO:0004834">
    <property type="term" value="F:tryptophan synthase activity"/>
    <property type="evidence" value="ECO:0007669"/>
    <property type="project" value="UniProtKB-UniRule"/>
</dbReference>
<dbReference type="CDD" id="cd04724">
    <property type="entry name" value="Tryptophan_synthase_alpha"/>
    <property type="match status" value="1"/>
</dbReference>
<dbReference type="FunFam" id="3.20.20.70:FF:000037">
    <property type="entry name" value="Tryptophan synthase alpha chain"/>
    <property type="match status" value="1"/>
</dbReference>
<dbReference type="Gene3D" id="3.20.20.70">
    <property type="entry name" value="Aldolase class I"/>
    <property type="match status" value="1"/>
</dbReference>
<dbReference type="HAMAP" id="MF_00131">
    <property type="entry name" value="Trp_synth_alpha"/>
    <property type="match status" value="1"/>
</dbReference>
<dbReference type="InterPro" id="IPR013785">
    <property type="entry name" value="Aldolase_TIM"/>
</dbReference>
<dbReference type="InterPro" id="IPR011060">
    <property type="entry name" value="RibuloseP-bd_barrel"/>
</dbReference>
<dbReference type="InterPro" id="IPR018204">
    <property type="entry name" value="Trp_synthase_alpha_AS"/>
</dbReference>
<dbReference type="InterPro" id="IPR002028">
    <property type="entry name" value="Trp_synthase_suA"/>
</dbReference>
<dbReference type="NCBIfam" id="TIGR00262">
    <property type="entry name" value="trpA"/>
    <property type="match status" value="1"/>
</dbReference>
<dbReference type="PANTHER" id="PTHR43406:SF1">
    <property type="entry name" value="TRYPTOPHAN SYNTHASE ALPHA CHAIN, CHLOROPLASTIC"/>
    <property type="match status" value="1"/>
</dbReference>
<dbReference type="PANTHER" id="PTHR43406">
    <property type="entry name" value="TRYPTOPHAN SYNTHASE, ALPHA CHAIN"/>
    <property type="match status" value="1"/>
</dbReference>
<dbReference type="Pfam" id="PF00290">
    <property type="entry name" value="Trp_syntA"/>
    <property type="match status" value="1"/>
</dbReference>
<dbReference type="SUPFAM" id="SSF51366">
    <property type="entry name" value="Ribulose-phoshate binding barrel"/>
    <property type="match status" value="1"/>
</dbReference>
<dbReference type="PROSITE" id="PS00167">
    <property type="entry name" value="TRP_SYNTHASE_ALPHA"/>
    <property type="match status" value="1"/>
</dbReference>
<proteinExistence type="inferred from homology"/>
<organism>
    <name type="scientific">Paracoccus denitrificans (strain Pd 1222)</name>
    <dbReference type="NCBI Taxonomy" id="318586"/>
    <lineage>
        <taxon>Bacteria</taxon>
        <taxon>Pseudomonadati</taxon>
        <taxon>Pseudomonadota</taxon>
        <taxon>Alphaproteobacteria</taxon>
        <taxon>Rhodobacterales</taxon>
        <taxon>Paracoccaceae</taxon>
        <taxon>Paracoccus</taxon>
    </lineage>
</organism>
<feature type="chain" id="PRO_1000018244" description="Tryptophan synthase alpha chain">
    <location>
        <begin position="1"/>
        <end position="265"/>
    </location>
</feature>
<feature type="active site" description="Proton acceptor" evidence="1">
    <location>
        <position position="49"/>
    </location>
</feature>
<feature type="active site" description="Proton acceptor" evidence="1">
    <location>
        <position position="60"/>
    </location>
</feature>
<sequence>MSRIDDTFARLSETGGKAFVAYMMGCDPDFDTSLQIMRGLPGAGVDIIELGMPFTDPMADGATIQAAGQRALAAGGSVSRVLDMVRAFRRDDDATPIVLMGYYNPIYARQGGVDRFITEAVEAGVDGLIVVDLPPEEDAELCLPAREAGLNFIRLATPTTDDRRLPAVVRNTSGFVYYVSVTGITGGPAANAAEVAPEVARIRAAAKLPVVVGFGISTPEAAQAVAGVADGCVVGSAIVKLIGEGRPVPEILSFVADLAQGAHSA</sequence>
<accession>A1AYV3</accession>
<comment type="function">
    <text evidence="1">The alpha subunit is responsible for the aldol cleavage of indoleglycerol phosphate to indole and glyceraldehyde 3-phosphate.</text>
</comment>
<comment type="catalytic activity">
    <reaction evidence="1">
        <text>(1S,2R)-1-C-(indol-3-yl)glycerol 3-phosphate + L-serine = D-glyceraldehyde 3-phosphate + L-tryptophan + H2O</text>
        <dbReference type="Rhea" id="RHEA:10532"/>
        <dbReference type="ChEBI" id="CHEBI:15377"/>
        <dbReference type="ChEBI" id="CHEBI:33384"/>
        <dbReference type="ChEBI" id="CHEBI:57912"/>
        <dbReference type="ChEBI" id="CHEBI:58866"/>
        <dbReference type="ChEBI" id="CHEBI:59776"/>
        <dbReference type="EC" id="4.2.1.20"/>
    </reaction>
</comment>
<comment type="pathway">
    <text evidence="1">Amino-acid biosynthesis; L-tryptophan biosynthesis; L-tryptophan from chorismate: step 5/5.</text>
</comment>
<comment type="subunit">
    <text evidence="1">Tetramer of two alpha and two beta chains.</text>
</comment>
<comment type="similarity">
    <text evidence="1">Belongs to the TrpA family.</text>
</comment>
<reference key="1">
    <citation type="submission" date="2006-12" db="EMBL/GenBank/DDBJ databases">
        <title>Complete sequence of chromosome 1 of Paracoccus denitrificans PD1222.</title>
        <authorList>
            <person name="Copeland A."/>
            <person name="Lucas S."/>
            <person name="Lapidus A."/>
            <person name="Barry K."/>
            <person name="Detter J.C."/>
            <person name="Glavina del Rio T."/>
            <person name="Hammon N."/>
            <person name="Israni S."/>
            <person name="Dalin E."/>
            <person name="Tice H."/>
            <person name="Pitluck S."/>
            <person name="Munk A.C."/>
            <person name="Brettin T."/>
            <person name="Bruce D."/>
            <person name="Han C."/>
            <person name="Tapia R."/>
            <person name="Gilna P."/>
            <person name="Schmutz J."/>
            <person name="Larimer F."/>
            <person name="Land M."/>
            <person name="Hauser L."/>
            <person name="Kyrpides N."/>
            <person name="Lykidis A."/>
            <person name="Spiro S."/>
            <person name="Richardson D.J."/>
            <person name="Moir J.W.B."/>
            <person name="Ferguson S.J."/>
            <person name="van Spanning R.J.M."/>
            <person name="Richardson P."/>
        </authorList>
    </citation>
    <scope>NUCLEOTIDE SEQUENCE [LARGE SCALE GENOMIC DNA]</scope>
    <source>
        <strain>Pd 1222</strain>
    </source>
</reference>
<evidence type="ECO:0000255" key="1">
    <source>
        <dbReference type="HAMAP-Rule" id="MF_00131"/>
    </source>
</evidence>